<accession>B5YZC3</accession>
<keyword id="KW-0131">Cell cycle</keyword>
<keyword id="KW-0132">Cell division</keyword>
<keyword id="KW-0997">Cell inner membrane</keyword>
<keyword id="KW-1003">Cell membrane</keyword>
<keyword id="KW-0133">Cell shape</keyword>
<keyword id="KW-0961">Cell wall biogenesis/degradation</keyword>
<keyword id="KW-0460">Magnesium</keyword>
<keyword id="KW-0472">Membrane</keyword>
<keyword id="KW-0479">Metal-binding</keyword>
<keyword id="KW-0573">Peptidoglycan synthesis</keyword>
<keyword id="KW-0808">Transferase</keyword>
<keyword id="KW-0812">Transmembrane</keyword>
<keyword id="KW-1133">Transmembrane helix</keyword>
<name>MRAY_ECO5E</name>
<gene>
    <name evidence="1" type="primary">mraY</name>
    <name type="ordered locus">ECH74115_0095</name>
</gene>
<comment type="function">
    <text evidence="1">Catalyzes the initial step of the lipid cycle reactions in the biosynthesis of the cell wall peptidoglycan: transfers peptidoglycan precursor phospho-MurNAc-pentapeptide from UDP-MurNAc-pentapeptide onto the lipid carrier undecaprenyl phosphate, yielding undecaprenyl-pyrophosphoryl-MurNAc-pentapeptide, known as lipid I.</text>
</comment>
<comment type="catalytic activity">
    <reaction evidence="1">
        <text>UDP-N-acetyl-alpha-D-muramoyl-L-alanyl-gamma-D-glutamyl-meso-2,6-diaminopimeloyl-D-alanyl-D-alanine + di-trans,octa-cis-undecaprenyl phosphate = di-trans,octa-cis-undecaprenyl diphospho-N-acetyl-alpha-D-muramoyl-L-alanyl-D-glutamyl-meso-2,6-diaminopimeloyl-D-alanyl-D-alanine + UMP</text>
        <dbReference type="Rhea" id="RHEA:28386"/>
        <dbReference type="ChEBI" id="CHEBI:57865"/>
        <dbReference type="ChEBI" id="CHEBI:60392"/>
        <dbReference type="ChEBI" id="CHEBI:61386"/>
        <dbReference type="ChEBI" id="CHEBI:61387"/>
        <dbReference type="EC" id="2.7.8.13"/>
    </reaction>
</comment>
<comment type="cofactor">
    <cofactor evidence="1">
        <name>Mg(2+)</name>
        <dbReference type="ChEBI" id="CHEBI:18420"/>
    </cofactor>
</comment>
<comment type="pathway">
    <text evidence="1">Cell wall biogenesis; peptidoglycan biosynthesis.</text>
</comment>
<comment type="subcellular location">
    <subcellularLocation>
        <location evidence="1">Cell inner membrane</location>
        <topology evidence="1">Multi-pass membrane protein</topology>
    </subcellularLocation>
</comment>
<comment type="similarity">
    <text evidence="1">Belongs to the glycosyltransferase 4 family. MraY subfamily.</text>
</comment>
<evidence type="ECO:0000255" key="1">
    <source>
        <dbReference type="HAMAP-Rule" id="MF_00038"/>
    </source>
</evidence>
<feature type="chain" id="PRO_1000090623" description="Phospho-N-acetylmuramoyl-pentapeptide-transferase">
    <location>
        <begin position="1"/>
        <end position="360"/>
    </location>
</feature>
<feature type="topological domain" description="Periplasmic" evidence="1">
    <location>
        <begin position="1"/>
        <end position="25"/>
    </location>
</feature>
<feature type="transmembrane region" description="Helical" evidence="1">
    <location>
        <begin position="26"/>
        <end position="46"/>
    </location>
</feature>
<feature type="topological domain" description="Cytoplasmic" evidence="1">
    <location>
        <begin position="47"/>
        <end position="71"/>
    </location>
</feature>
<feature type="transmembrane region" description="Helical" evidence="1">
    <location>
        <begin position="72"/>
        <end position="92"/>
    </location>
</feature>
<feature type="topological domain" description="Periplasmic" evidence="1">
    <location>
        <position position="93"/>
    </location>
</feature>
<feature type="transmembrane region" description="Helical" evidence="1">
    <location>
        <begin position="94"/>
        <end position="114"/>
    </location>
</feature>
<feature type="topological domain" description="Cytoplasmic" evidence="1">
    <location>
        <begin position="115"/>
        <end position="131"/>
    </location>
</feature>
<feature type="transmembrane region" description="Helical" evidence="1">
    <location>
        <begin position="132"/>
        <end position="152"/>
    </location>
</feature>
<feature type="topological domain" description="Periplasmic" evidence="1">
    <location>
        <begin position="153"/>
        <end position="167"/>
    </location>
</feature>
<feature type="transmembrane region" description="Helical" evidence="1">
    <location>
        <begin position="168"/>
        <end position="188"/>
    </location>
</feature>
<feature type="topological domain" description="Cytoplasmic" evidence="1">
    <location>
        <begin position="189"/>
        <end position="198"/>
    </location>
</feature>
<feature type="transmembrane region" description="Helical" evidence="1">
    <location>
        <begin position="199"/>
        <end position="219"/>
    </location>
</feature>
<feature type="topological domain" description="Periplasmic" evidence="1">
    <location>
        <begin position="220"/>
        <end position="235"/>
    </location>
</feature>
<feature type="transmembrane region" description="Helical" evidence="1">
    <location>
        <begin position="236"/>
        <end position="256"/>
    </location>
</feature>
<feature type="topological domain" description="Cytoplasmic" evidence="1">
    <location>
        <begin position="257"/>
        <end position="262"/>
    </location>
</feature>
<feature type="transmembrane region" description="Helical" evidence="1">
    <location>
        <begin position="263"/>
        <end position="283"/>
    </location>
</feature>
<feature type="topological domain" description="Periplasmic" evidence="1">
    <location>
        <begin position="284"/>
        <end position="287"/>
    </location>
</feature>
<feature type="transmembrane region" description="Helical" evidence="1">
    <location>
        <begin position="288"/>
        <end position="308"/>
    </location>
</feature>
<feature type="topological domain" description="Cytoplasmic" evidence="1">
    <location>
        <begin position="309"/>
        <end position="337"/>
    </location>
</feature>
<feature type="transmembrane region" description="Helical" evidence="1">
    <location>
        <begin position="338"/>
        <end position="358"/>
    </location>
</feature>
<feature type="topological domain" description="Periplasmic" evidence="1">
    <location>
        <begin position="359"/>
        <end position="360"/>
    </location>
</feature>
<dbReference type="EC" id="2.7.8.13" evidence="1"/>
<dbReference type="EMBL" id="CP001164">
    <property type="protein sequence ID" value="ACI36910.1"/>
    <property type="molecule type" value="Genomic_DNA"/>
</dbReference>
<dbReference type="RefSeq" id="WP_000964134.1">
    <property type="nucleotide sequence ID" value="NC_011353.1"/>
</dbReference>
<dbReference type="SMR" id="B5YZC3"/>
<dbReference type="GeneID" id="75169987"/>
<dbReference type="KEGG" id="ecf:ECH74115_0095"/>
<dbReference type="HOGENOM" id="CLU_023982_0_0_6"/>
<dbReference type="UniPathway" id="UPA00219"/>
<dbReference type="GO" id="GO:0005886">
    <property type="term" value="C:plasma membrane"/>
    <property type="evidence" value="ECO:0007669"/>
    <property type="project" value="UniProtKB-SubCell"/>
</dbReference>
<dbReference type="GO" id="GO:0046872">
    <property type="term" value="F:metal ion binding"/>
    <property type="evidence" value="ECO:0007669"/>
    <property type="project" value="UniProtKB-KW"/>
</dbReference>
<dbReference type="GO" id="GO:0008963">
    <property type="term" value="F:phospho-N-acetylmuramoyl-pentapeptide-transferase activity"/>
    <property type="evidence" value="ECO:0007669"/>
    <property type="project" value="UniProtKB-UniRule"/>
</dbReference>
<dbReference type="GO" id="GO:0051992">
    <property type="term" value="F:UDP-N-acetylmuramoyl-L-alanyl-D-glutamyl-meso-2,6-diaminopimelyl-D-alanyl-D-alanine:undecaprenyl-phosphate transferase activity"/>
    <property type="evidence" value="ECO:0007669"/>
    <property type="project" value="RHEA"/>
</dbReference>
<dbReference type="GO" id="GO:0051301">
    <property type="term" value="P:cell division"/>
    <property type="evidence" value="ECO:0007669"/>
    <property type="project" value="UniProtKB-KW"/>
</dbReference>
<dbReference type="GO" id="GO:0071555">
    <property type="term" value="P:cell wall organization"/>
    <property type="evidence" value="ECO:0007669"/>
    <property type="project" value="UniProtKB-KW"/>
</dbReference>
<dbReference type="GO" id="GO:0009252">
    <property type="term" value="P:peptidoglycan biosynthetic process"/>
    <property type="evidence" value="ECO:0007669"/>
    <property type="project" value="UniProtKB-UniRule"/>
</dbReference>
<dbReference type="GO" id="GO:0008360">
    <property type="term" value="P:regulation of cell shape"/>
    <property type="evidence" value="ECO:0007669"/>
    <property type="project" value="UniProtKB-KW"/>
</dbReference>
<dbReference type="CDD" id="cd06852">
    <property type="entry name" value="GT_MraY"/>
    <property type="match status" value="1"/>
</dbReference>
<dbReference type="HAMAP" id="MF_00038">
    <property type="entry name" value="MraY"/>
    <property type="match status" value="1"/>
</dbReference>
<dbReference type="InterPro" id="IPR000715">
    <property type="entry name" value="Glycosyl_transferase_4"/>
</dbReference>
<dbReference type="InterPro" id="IPR003524">
    <property type="entry name" value="PNAcMuramoyl-5peptid_Trfase"/>
</dbReference>
<dbReference type="InterPro" id="IPR018480">
    <property type="entry name" value="PNAcMuramoyl-5peptid_Trfase_CS"/>
</dbReference>
<dbReference type="NCBIfam" id="TIGR00445">
    <property type="entry name" value="mraY"/>
    <property type="match status" value="1"/>
</dbReference>
<dbReference type="PANTHER" id="PTHR22926">
    <property type="entry name" value="PHOSPHO-N-ACETYLMURAMOYL-PENTAPEPTIDE-TRANSFERASE"/>
    <property type="match status" value="1"/>
</dbReference>
<dbReference type="PANTHER" id="PTHR22926:SF5">
    <property type="entry name" value="PHOSPHO-N-ACETYLMURAMOYL-PENTAPEPTIDE-TRANSFERASE HOMOLOG"/>
    <property type="match status" value="1"/>
</dbReference>
<dbReference type="Pfam" id="PF00953">
    <property type="entry name" value="Glycos_transf_4"/>
    <property type="match status" value="1"/>
</dbReference>
<dbReference type="Pfam" id="PF10555">
    <property type="entry name" value="MraY_sig1"/>
    <property type="match status" value="1"/>
</dbReference>
<dbReference type="PROSITE" id="PS01347">
    <property type="entry name" value="MRAY_1"/>
    <property type="match status" value="1"/>
</dbReference>
<dbReference type="PROSITE" id="PS01348">
    <property type="entry name" value="MRAY_2"/>
    <property type="match status" value="1"/>
</dbReference>
<organism>
    <name type="scientific">Escherichia coli O157:H7 (strain EC4115 / EHEC)</name>
    <dbReference type="NCBI Taxonomy" id="444450"/>
    <lineage>
        <taxon>Bacteria</taxon>
        <taxon>Pseudomonadati</taxon>
        <taxon>Pseudomonadota</taxon>
        <taxon>Gammaproteobacteria</taxon>
        <taxon>Enterobacterales</taxon>
        <taxon>Enterobacteriaceae</taxon>
        <taxon>Escherichia</taxon>
    </lineage>
</organism>
<proteinExistence type="inferred from homology"/>
<reference key="1">
    <citation type="journal article" date="2011" name="Proc. Natl. Acad. Sci. U.S.A.">
        <title>Genomic anatomy of Escherichia coli O157:H7 outbreaks.</title>
        <authorList>
            <person name="Eppinger M."/>
            <person name="Mammel M.K."/>
            <person name="Leclerc J.E."/>
            <person name="Ravel J."/>
            <person name="Cebula T.A."/>
        </authorList>
    </citation>
    <scope>NUCLEOTIDE SEQUENCE [LARGE SCALE GENOMIC DNA]</scope>
    <source>
        <strain>EC4115 / EHEC</strain>
    </source>
</reference>
<sequence>MLVWLAEHLVKYYSGFNVFSYLTFRAIVSLLTALFISLWMGPRMIAHLQKLSFGQVVRNDGPESHFSKRGTPTMGGIMILTAIVISVLLWAYPSNPYVWCVLVVLVGYGVIGFVDDYRKVVRKDTKGLIARWKYFWMSVIALGVAFALYLVGKDTPATQLVVPFFKDVMPQLGLFYILLAYFVIVGTGNAVNLTDGLDGLAIMPTVFVAGGFALVAWATGNMNFASYLHIPYLRHAGELVIVCTAIVGAGLGFLWFNTYPAQVFMGDVGSLALGGALGIIAVLLRQEFLLVIMGGVFVVETLSVILQVGSFKLRGQRIFRMAPIHHHYELKGWPEPRVIVRFWIISLMLVLIGLATLKVR</sequence>
<protein>
    <recommendedName>
        <fullName evidence="1">Phospho-N-acetylmuramoyl-pentapeptide-transferase</fullName>
        <ecNumber evidence="1">2.7.8.13</ecNumber>
    </recommendedName>
    <alternativeName>
        <fullName evidence="1">UDP-MurNAc-pentapeptide phosphotransferase</fullName>
    </alternativeName>
</protein>